<evidence type="ECO:0000250" key="1"/>
<evidence type="ECO:0000255" key="2"/>
<evidence type="ECO:0000255" key="3">
    <source>
        <dbReference type="PROSITE-ProRule" id="PRU00279"/>
    </source>
</evidence>
<evidence type="ECO:0000305" key="4"/>
<accession>O04354</accession>
<proteinExistence type="evidence at transcript level"/>
<keyword id="KW-0249">Electron transport</keyword>
<keyword id="KW-0256">Endoplasmic reticulum</keyword>
<keyword id="KW-0349">Heme</keyword>
<keyword id="KW-0408">Iron</keyword>
<keyword id="KW-0472">Membrane</keyword>
<keyword id="KW-0479">Metal-binding</keyword>
<keyword id="KW-0492">Microsome</keyword>
<keyword id="KW-0812">Transmembrane</keyword>
<keyword id="KW-1133">Transmembrane helix</keyword>
<keyword id="KW-0813">Transport</keyword>
<reference key="1">
    <citation type="journal article" date="1997" name="Proc. Natl. Acad. Sci. U.S.A.">
        <title>Expression of a borage desaturase cDNA containing an N-terminal cytochrome b5 domain results in the accumulation of high levels of delta6-desaturated fatty acids in transgenic tobacco.</title>
        <authorList>
            <person name="Sayanova O."/>
            <person name="Smith M.A."/>
            <person name="Lapinskas P.A."/>
            <person name="Stobart K."/>
            <person name="Dobson G."/>
            <person name="Christie W.W."/>
            <person name="Shewry P.R."/>
            <person name="Napier J.A."/>
        </authorList>
    </citation>
    <scope>NUCLEOTIDE SEQUENCE [MRNA]</scope>
</reference>
<protein>
    <recommendedName>
        <fullName>Cytochrome b5</fullName>
    </recommendedName>
</protein>
<comment type="function">
    <text evidence="1">Membrane bound hemoprotein which function as an electron carrier for several membrane bound oxygenases.</text>
</comment>
<comment type="subcellular location">
    <subcellularLocation>
        <location evidence="1">Endoplasmic reticulum membrane</location>
        <topology evidence="1">Single-pass membrane protein</topology>
        <orientation evidence="1">Cytoplasmic side</orientation>
    </subcellularLocation>
    <subcellularLocation>
        <location evidence="1">Microsome membrane</location>
        <topology evidence="1">Single-pass membrane protein</topology>
        <orientation evidence="1">Cytoplasmic side</orientation>
    </subcellularLocation>
</comment>
<comment type="similarity">
    <text evidence="4">Belongs to the cytochrome b5 family.</text>
</comment>
<dbReference type="EMBL" id="U79011">
    <property type="protein sequence ID" value="AAC49701.1"/>
    <property type="molecule type" value="mRNA"/>
</dbReference>
<dbReference type="SMR" id="O04354"/>
<dbReference type="GO" id="GO:0005789">
    <property type="term" value="C:endoplasmic reticulum membrane"/>
    <property type="evidence" value="ECO:0007669"/>
    <property type="project" value="UniProtKB-SubCell"/>
</dbReference>
<dbReference type="GO" id="GO:0020037">
    <property type="term" value="F:heme binding"/>
    <property type="evidence" value="ECO:0007669"/>
    <property type="project" value="InterPro"/>
</dbReference>
<dbReference type="GO" id="GO:0046872">
    <property type="term" value="F:metal ion binding"/>
    <property type="evidence" value="ECO:0007669"/>
    <property type="project" value="UniProtKB-KW"/>
</dbReference>
<dbReference type="FunFam" id="3.10.120.10:FF:000002">
    <property type="entry name" value="Cytochrome b5 type B"/>
    <property type="match status" value="1"/>
</dbReference>
<dbReference type="Gene3D" id="3.10.120.10">
    <property type="entry name" value="Cytochrome b5-like heme/steroid binding domain"/>
    <property type="match status" value="1"/>
</dbReference>
<dbReference type="InterPro" id="IPR001199">
    <property type="entry name" value="Cyt_B5-like_heme/steroid-bd"/>
</dbReference>
<dbReference type="InterPro" id="IPR036400">
    <property type="entry name" value="Cyt_B5-like_heme/steroid_sf"/>
</dbReference>
<dbReference type="InterPro" id="IPR018506">
    <property type="entry name" value="Cyt_B5_heme-BS"/>
</dbReference>
<dbReference type="InterPro" id="IPR050668">
    <property type="entry name" value="Cytochrome_b5"/>
</dbReference>
<dbReference type="PANTHER" id="PTHR19359">
    <property type="entry name" value="CYTOCHROME B5"/>
    <property type="match status" value="1"/>
</dbReference>
<dbReference type="PANTHER" id="PTHR19359:SF129">
    <property type="entry name" value="CYTOCHROME B5 ISOFORM B"/>
    <property type="match status" value="1"/>
</dbReference>
<dbReference type="Pfam" id="PF00173">
    <property type="entry name" value="Cyt-b5"/>
    <property type="match status" value="1"/>
</dbReference>
<dbReference type="PRINTS" id="PR00363">
    <property type="entry name" value="CYTOCHROMEB5"/>
</dbReference>
<dbReference type="SMART" id="SM01117">
    <property type="entry name" value="Cyt-b5"/>
    <property type="match status" value="1"/>
</dbReference>
<dbReference type="SUPFAM" id="SSF55856">
    <property type="entry name" value="Cytochrome b5-like heme/steroid binding domain"/>
    <property type="match status" value="1"/>
</dbReference>
<dbReference type="PROSITE" id="PS00191">
    <property type="entry name" value="CYTOCHROME_B5_1"/>
    <property type="match status" value="1"/>
</dbReference>
<dbReference type="PROSITE" id="PS50255">
    <property type="entry name" value="CYTOCHROME_B5_2"/>
    <property type="match status" value="1"/>
</dbReference>
<name>CYB5_BOROF</name>
<organism>
    <name type="scientific">Borago officinalis</name>
    <name type="common">Bourrache</name>
    <name type="synonym">Borage</name>
    <dbReference type="NCBI Taxonomy" id="13363"/>
    <lineage>
        <taxon>Eukaryota</taxon>
        <taxon>Viridiplantae</taxon>
        <taxon>Streptophyta</taxon>
        <taxon>Embryophyta</taxon>
        <taxon>Tracheophyta</taxon>
        <taxon>Spermatophyta</taxon>
        <taxon>Magnoliopsida</taxon>
        <taxon>eudicotyledons</taxon>
        <taxon>Gunneridae</taxon>
        <taxon>Pentapetalae</taxon>
        <taxon>asterids</taxon>
        <taxon>lamiids</taxon>
        <taxon>Boraginales</taxon>
        <taxon>Boraginaceae</taxon>
        <taxon>Boraginoideae</taxon>
        <taxon>Boragineae</taxon>
        <taxon>Boragininae</taxon>
        <taxon>Borago</taxon>
    </lineage>
</organism>
<sequence length="132" mass="14557">MGKIFTLAEVAQHNNSKDCWLIINGKVYDVTKFLEDHPGGDDVLLSATGKDATDDFEDIGHSSSAKAMLDEYYVGDIDSSSIPSQVKYTPPKQPLYNPDKTREFVIKLLQFLVPLVILAGAIGIRFYTKSSA</sequence>
<feature type="chain" id="PRO_0000166022" description="Cytochrome b5">
    <location>
        <begin position="1"/>
        <end position="132"/>
    </location>
</feature>
<feature type="transmembrane region" description="Helical" evidence="2">
    <location>
        <begin position="104"/>
        <end position="124"/>
    </location>
</feature>
<feature type="domain" description="Cytochrome b5 heme-binding" evidence="3">
    <location>
        <begin position="2"/>
        <end position="78"/>
    </location>
</feature>
<feature type="binding site" description="axial binding residue" evidence="3">
    <location>
        <position position="37"/>
    </location>
    <ligand>
        <name>heme</name>
        <dbReference type="ChEBI" id="CHEBI:30413"/>
    </ligand>
    <ligandPart>
        <name>Fe</name>
        <dbReference type="ChEBI" id="CHEBI:18248"/>
    </ligandPart>
</feature>
<feature type="binding site" description="axial binding residue" evidence="3">
    <location>
        <position position="61"/>
    </location>
    <ligand>
        <name>heme</name>
        <dbReference type="ChEBI" id="CHEBI:30413"/>
    </ligand>
    <ligandPart>
        <name>Fe</name>
        <dbReference type="ChEBI" id="CHEBI:18248"/>
    </ligandPart>
</feature>